<reference key="1">
    <citation type="journal article" date="1990" name="J. Gen. Virol.">
        <title>The complete nucleotide sequence of enterovirus type 70: relationships with other members of the picornaviridae.</title>
        <authorList>
            <person name="Ryan M.D."/>
            <person name="Jenkins O."/>
            <person name="Hughes P.J."/>
            <person name="Brown A."/>
            <person name="Knowles N.J."/>
            <person name="Booth D."/>
            <person name="Minor P.D."/>
            <person name="Almond J.W."/>
        </authorList>
    </citation>
    <scope>NUCLEOTIDE SEQUENCE [GENOMIC RNA]</scope>
</reference>
<reference key="2">
    <citation type="journal article" date="1996" name="J. Virol.">
        <title>The HeLa cell receptor for enterovirus 70 is decay-accelerating factor (CD55).</title>
        <authorList>
            <person name="Karnauchow T.M."/>
            <person name="Tolson D.L."/>
            <person name="Harrison B.A."/>
            <person name="Altman E."/>
            <person name="Lublin D.M."/>
            <person name="Dimock K."/>
        </authorList>
    </citation>
    <scope>INTERACTION WITH HOST CD55</scope>
</reference>
<accession>P32537</accession>
<feature type="initiator methionine" description="Removed; by host" evidence="2">
    <location>
        <position position="1"/>
    </location>
</feature>
<feature type="chain" id="PRO_0000426121" description="Genome polyprotein">
    <location>
        <begin position="2"/>
        <end position="2194"/>
    </location>
</feature>
<feature type="chain" id="PRO_0000426122" description="P1">
    <location>
        <begin position="2"/>
        <end position="867"/>
    </location>
</feature>
<feature type="chain" id="PRO_0000426123" description="Capsid protein VP0">
    <location>
        <begin position="2"/>
        <end position="319"/>
    </location>
</feature>
<feature type="chain" id="PRO_0000426124" description="Capsid protein VP4">
    <location>
        <begin position="2"/>
        <end position="69"/>
    </location>
</feature>
<feature type="chain" id="PRO_0000426125" description="Capsid protein VP2">
    <location>
        <begin position="70"/>
        <end position="319"/>
    </location>
</feature>
<feature type="chain" id="PRO_0000426126" description="Capsid protein VP3">
    <location>
        <begin position="320"/>
        <end position="561"/>
    </location>
</feature>
<feature type="chain" id="PRO_0000426127" description="Capsid protein VP1">
    <location>
        <begin position="562"/>
        <end position="867"/>
    </location>
</feature>
<feature type="chain" id="PRO_0000426128" description="P2">
    <location>
        <begin position="868"/>
        <end position="1443"/>
    </location>
</feature>
<feature type="chain" id="PRO_0000426129" description="Protease 2A">
    <location>
        <begin position="868"/>
        <end position="1014"/>
    </location>
</feature>
<feature type="chain" id="PRO_0000039475" description="Protein 2B">
    <location>
        <begin position="1015"/>
        <end position="1113"/>
    </location>
</feature>
<feature type="chain" id="PRO_0000039476" description="Protein 2C">
    <location>
        <begin position="1114"/>
        <end position="1443"/>
    </location>
</feature>
<feature type="chain" id="PRO_0000426130" description="P3">
    <location>
        <begin position="1444"/>
        <end position="2194"/>
    </location>
</feature>
<feature type="chain" id="PRO_0000426131" description="Protein 3AB">
    <location>
        <begin position="1444"/>
        <end position="1554"/>
    </location>
</feature>
<feature type="chain" id="PRO_0000039477" description="Protein 3A">
    <location>
        <begin position="1444"/>
        <end position="1532"/>
    </location>
</feature>
<feature type="chain" id="PRO_0000426132" description="Viral protein genome-linked">
    <location>
        <begin position="1533"/>
        <end position="1554"/>
    </location>
</feature>
<feature type="chain" id="PRO_0000426133" description="Protein 3CD">
    <location>
        <begin position="1555"/>
        <end position="2194"/>
    </location>
</feature>
<feature type="chain" id="PRO_0000426134" description="Protease 3C">
    <location>
        <begin position="1555"/>
        <end position="1737"/>
    </location>
</feature>
<feature type="chain" id="PRO_0000426135" description="RNA-directed RNA polymerase">
    <location>
        <begin position="1738"/>
        <end position="2194"/>
    </location>
</feature>
<feature type="topological domain" description="Cytoplasmic" evidence="9">
    <location>
        <begin position="2"/>
        <end position="1509"/>
    </location>
</feature>
<feature type="intramembrane region" evidence="9">
    <location>
        <begin position="1510"/>
        <end position="1525"/>
    </location>
</feature>
<feature type="topological domain" description="Cytoplasmic" evidence="9">
    <location>
        <begin position="1526"/>
        <end position="2194"/>
    </location>
</feature>
<feature type="domain" description="SF3 helicase" evidence="11">
    <location>
        <begin position="1218"/>
        <end position="1374"/>
    </location>
</feature>
<feature type="domain" description="Peptidase C3" evidence="12">
    <location>
        <begin position="1555"/>
        <end position="1733"/>
    </location>
</feature>
<feature type="domain" description="RdRp catalytic" evidence="10">
    <location>
        <begin position="1960"/>
        <end position="2075"/>
    </location>
</feature>
<feature type="zinc finger region" description="C4-type; degenerate" evidence="1">
    <location>
        <begin position="1382"/>
        <end position="1400"/>
    </location>
</feature>
<feature type="region of interest" description="Disordered" evidence="13">
    <location>
        <begin position="1"/>
        <end position="20"/>
    </location>
</feature>
<feature type="region of interest" description="Amphipathic alpha-helix" evidence="9">
    <location>
        <begin position="558"/>
        <end position="574"/>
    </location>
</feature>
<feature type="region of interest" description="Oligomerization" evidence="2">
    <location>
        <begin position="1114"/>
        <end position="1252"/>
    </location>
</feature>
<feature type="region of interest" description="Membrane-binding" evidence="2">
    <location>
        <begin position="1114"/>
        <end position="1186"/>
    </location>
</feature>
<feature type="region of interest" description="RNA-binding" evidence="2">
    <location>
        <begin position="1135"/>
        <end position="1139"/>
    </location>
</feature>
<feature type="region of interest" description="RNA-binding" evidence="2">
    <location>
        <begin position="1427"/>
        <end position="1434"/>
    </location>
</feature>
<feature type="region of interest" description="Oligomerization" evidence="2">
    <location>
        <begin position="1438"/>
        <end position="1443"/>
    </location>
</feature>
<feature type="active site" description="For protease 2A activity" evidence="2">
    <location>
        <position position="885"/>
    </location>
</feature>
<feature type="active site" description="For protease 2A activity" evidence="2">
    <location>
        <position position="903"/>
    </location>
</feature>
<feature type="active site" description="For protease 2A activity" evidence="2">
    <location>
        <position position="974"/>
    </location>
</feature>
<feature type="active site" description="For protease 3C activity" evidence="12">
    <location>
        <position position="1594"/>
    </location>
</feature>
<feature type="active site" description="For protease 3C activity" evidence="12">
    <location>
        <position position="1625"/>
    </location>
</feature>
<feature type="active site" description="For protease 3C activity" evidence="12">
    <location>
        <position position="1701"/>
    </location>
</feature>
<feature type="binding site" evidence="8">
    <location>
        <position position="920"/>
    </location>
    <ligand>
        <name>Zn(2+)</name>
        <dbReference type="ChEBI" id="CHEBI:29105"/>
        <label>1</label>
        <note>structural</note>
    </ligand>
</feature>
<feature type="binding site" evidence="8">
    <location>
        <position position="922"/>
    </location>
    <ligand>
        <name>Zn(2+)</name>
        <dbReference type="ChEBI" id="CHEBI:29105"/>
        <label>1</label>
        <note>structural</note>
    </ligand>
</feature>
<feature type="binding site" evidence="8">
    <location>
        <position position="980"/>
    </location>
    <ligand>
        <name>Zn(2+)</name>
        <dbReference type="ChEBI" id="CHEBI:29105"/>
        <label>1</label>
        <note>structural</note>
    </ligand>
</feature>
<feature type="binding site" evidence="8">
    <location>
        <position position="982"/>
    </location>
    <ligand>
        <name>Zn(2+)</name>
        <dbReference type="ChEBI" id="CHEBI:29105"/>
        <label>1</label>
        <note>structural</note>
    </ligand>
</feature>
<feature type="binding site" evidence="11">
    <location>
        <begin position="1242"/>
        <end position="1249"/>
    </location>
    <ligand>
        <name>ATP</name>
        <dbReference type="ChEBI" id="CHEBI:30616"/>
    </ligand>
</feature>
<feature type="binding site" evidence="1">
    <location>
        <position position="1382"/>
    </location>
    <ligand>
        <name>Zn(2+)</name>
        <dbReference type="ChEBI" id="CHEBI:29105"/>
        <label>2</label>
    </ligand>
</feature>
<feature type="binding site" evidence="1">
    <location>
        <position position="1395"/>
    </location>
    <ligand>
        <name>Zn(2+)</name>
        <dbReference type="ChEBI" id="CHEBI:29105"/>
        <label>2</label>
    </ligand>
</feature>
<feature type="binding site" evidence="1">
    <location>
        <position position="1400"/>
    </location>
    <ligand>
        <name>Zn(2+)</name>
        <dbReference type="ChEBI" id="CHEBI:29105"/>
        <label>2</label>
    </ligand>
</feature>
<feature type="binding site" evidence="2">
    <location>
        <position position="1966"/>
    </location>
    <ligand>
        <name>Mg(2+)</name>
        <dbReference type="ChEBI" id="CHEBI:18420"/>
        <label>1</label>
        <note>catalytic; for RdRp activity</note>
    </ligand>
</feature>
<feature type="binding site" evidence="2">
    <location>
        <position position="1966"/>
    </location>
    <ligand>
        <name>Mg(2+)</name>
        <dbReference type="ChEBI" id="CHEBI:18420"/>
        <label>2</label>
        <note>catalytic; for RdRp activity</note>
    </ligand>
</feature>
<feature type="binding site" evidence="2">
    <location>
        <position position="2061"/>
    </location>
    <ligand>
        <name>Mg(2+)</name>
        <dbReference type="ChEBI" id="CHEBI:18420"/>
        <label>1</label>
        <note>catalytic; for RdRp activity</note>
    </ligand>
</feature>
<feature type="binding site" evidence="2">
    <location>
        <position position="2061"/>
    </location>
    <ligand>
        <name>Mg(2+)</name>
        <dbReference type="ChEBI" id="CHEBI:18420"/>
        <label>2</label>
        <note>catalytic; for RdRp activity</note>
    </ligand>
</feature>
<feature type="site" description="Cleavage; by autolysis" evidence="2">
    <location>
        <begin position="69"/>
        <end position="70"/>
    </location>
</feature>
<feature type="site" description="Cleavage; by protease 3C" evidence="3">
    <location>
        <begin position="319"/>
        <end position="320"/>
    </location>
</feature>
<feature type="site" description="Cleavage; by autolysis" evidence="3">
    <location>
        <begin position="867"/>
        <end position="868"/>
    </location>
</feature>
<feature type="site" description="Cleavage; by protease 3C" evidence="3">
    <location>
        <begin position="1014"/>
        <end position="1015"/>
    </location>
</feature>
<feature type="site" description="Cleavage; by protease 3C" evidence="3">
    <location>
        <begin position="1113"/>
        <end position="1114"/>
    </location>
</feature>
<feature type="site" description="Involved in the interaction with host RTN3" evidence="7">
    <location>
        <position position="1138"/>
    </location>
</feature>
<feature type="site" description="Cleavage; by protease 3C" evidence="3">
    <location>
        <begin position="1443"/>
        <end position="1444"/>
    </location>
</feature>
<feature type="site" description="Cleavage; by protease 3C" evidence="3">
    <location>
        <begin position="1532"/>
        <end position="1533"/>
    </location>
</feature>
<feature type="site" description="Cleavage; by protease 3C" evidence="3">
    <location>
        <begin position="1554"/>
        <end position="1555"/>
    </location>
</feature>
<feature type="site" description="Cleavage; by protease 3C" evidence="3">
    <location>
        <begin position="1737"/>
        <end position="1738"/>
    </location>
</feature>
<feature type="modified residue" description="O-(5'-phospho-RNA)-tyrosine" evidence="2">
    <location>
        <position position="1535"/>
    </location>
</feature>
<feature type="lipid moiety-binding region" description="N-myristoyl glycine; by host" evidence="2">
    <location>
        <position position="2"/>
    </location>
</feature>
<organismHost>
    <name type="scientific">Homo sapiens</name>
    <name type="common">Human</name>
    <dbReference type="NCBI Taxonomy" id="9606"/>
</organismHost>
<protein>
    <recommendedName>
        <fullName>Genome polyprotein</fullName>
    </recommendedName>
    <component>
        <recommendedName>
            <fullName>P1</fullName>
        </recommendedName>
    </component>
    <component>
        <recommendedName>
            <fullName>Capsid protein VP0</fullName>
        </recommendedName>
        <alternativeName>
            <fullName>VP4-VP2</fullName>
        </alternativeName>
    </component>
    <component>
        <recommendedName>
            <fullName>Capsid protein VP4</fullName>
        </recommendedName>
        <alternativeName>
            <fullName>P1A</fullName>
        </alternativeName>
        <alternativeName>
            <fullName>Virion protein 4</fullName>
        </alternativeName>
    </component>
    <component>
        <recommendedName>
            <fullName>Capsid protein VP2</fullName>
        </recommendedName>
        <alternativeName>
            <fullName>P1B</fullName>
        </alternativeName>
        <alternativeName>
            <fullName>Virion protein 2</fullName>
        </alternativeName>
    </component>
    <component>
        <recommendedName>
            <fullName>Capsid protein VP3</fullName>
        </recommendedName>
        <alternativeName>
            <fullName>P1C</fullName>
        </alternativeName>
        <alternativeName>
            <fullName>Virion protein 3</fullName>
        </alternativeName>
    </component>
    <component>
        <recommendedName>
            <fullName>Capsid protein VP1</fullName>
        </recommendedName>
        <alternativeName>
            <fullName>P1D</fullName>
        </alternativeName>
        <alternativeName>
            <fullName>Virion protein 1</fullName>
        </alternativeName>
    </component>
    <component>
        <recommendedName>
            <fullName>P2</fullName>
        </recommendedName>
    </component>
    <component>
        <recommendedName>
            <fullName>Protease 2A</fullName>
            <shortName>P2A</shortName>
            <ecNumber evidence="2">3.4.22.29</ecNumber>
        </recommendedName>
        <alternativeName>
            <fullName>Picornain 2A</fullName>
        </alternativeName>
        <alternativeName>
            <fullName>Protein 2A</fullName>
        </alternativeName>
    </component>
    <component>
        <recommendedName>
            <fullName>Protein 2B</fullName>
            <shortName>P2B</shortName>
        </recommendedName>
    </component>
    <component>
        <recommendedName>
            <fullName>Protein 2C</fullName>
            <shortName>P2C</shortName>
            <ecNumber evidence="2">3.6.1.15</ecNumber>
        </recommendedName>
    </component>
    <component>
        <recommendedName>
            <fullName>P3</fullName>
        </recommendedName>
    </component>
    <component>
        <recommendedName>
            <fullName>Protein 3AB</fullName>
        </recommendedName>
    </component>
    <component>
        <recommendedName>
            <fullName>Protein 3A</fullName>
            <shortName>P3A</shortName>
        </recommendedName>
    </component>
    <component>
        <recommendedName>
            <fullName>Viral protein genome-linked</fullName>
            <shortName>VPg</shortName>
        </recommendedName>
        <alternativeName>
            <fullName>Protein 3B</fullName>
            <shortName>P3B</shortName>
        </alternativeName>
    </component>
    <component>
        <recommendedName>
            <fullName>Protein 3CD</fullName>
            <ecNumber>3.4.22.28</ecNumber>
        </recommendedName>
    </component>
    <component>
        <recommendedName>
            <fullName evidence="12">Protease 3C</fullName>
            <ecNumber evidence="12">3.4.22.28</ecNumber>
        </recommendedName>
        <alternativeName>
            <fullName evidence="12">Picornain 3C</fullName>
            <shortName evidence="12">P3C</shortName>
        </alternativeName>
    </component>
    <component>
        <recommendedName>
            <fullName evidence="10">RNA-directed RNA polymerase</fullName>
            <shortName>RdRp</shortName>
            <ecNumber evidence="10">2.7.7.48</ecNumber>
        </recommendedName>
        <alternativeName>
            <fullName>3D polymerase</fullName>
            <shortName>3Dpol</shortName>
        </alternativeName>
        <alternativeName>
            <fullName>Protein 3D</fullName>
            <shortName>3D</shortName>
        </alternativeName>
    </component>
</protein>
<dbReference type="EC" id="3.4.22.29" evidence="2"/>
<dbReference type="EC" id="3.6.1.15" evidence="2"/>
<dbReference type="EC" id="3.4.22.28" evidence="12"/>
<dbReference type="EC" id="2.7.7.48" evidence="10"/>
<dbReference type="EMBL" id="D00820">
    <property type="protein sequence ID" value="BAA18891.1"/>
    <property type="molecule type" value="Genomic_RNA"/>
</dbReference>
<dbReference type="PIR" id="A36253">
    <property type="entry name" value="GNNYE7"/>
</dbReference>
<dbReference type="RefSeq" id="NP_040760.1">
    <property type="nucleotide sequence ID" value="NC_001430.1"/>
</dbReference>
<dbReference type="EMDB" id="EMD-13022"/>
<dbReference type="EMDB" id="EMD-13125"/>
<dbReference type="EMDB" id="EMD-13126"/>
<dbReference type="EMDB" id="EMD-13127"/>
<dbReference type="EMDB" id="EMD-13128"/>
<dbReference type="SMR" id="P32537"/>
<dbReference type="MEROPS" id="C03.011"/>
<dbReference type="MEROPS" id="C03.020"/>
<dbReference type="MEROPS" id="N08.001"/>
<dbReference type="GeneID" id="1461118"/>
<dbReference type="KEGG" id="vg:1461118"/>
<dbReference type="Proteomes" id="UP000008683">
    <property type="component" value="Segment"/>
</dbReference>
<dbReference type="GO" id="GO:0044162">
    <property type="term" value="C:host cell cytoplasmic vesicle membrane"/>
    <property type="evidence" value="ECO:0007669"/>
    <property type="project" value="UniProtKB-SubCell"/>
</dbReference>
<dbReference type="GO" id="GO:0042025">
    <property type="term" value="C:host cell nucleus"/>
    <property type="evidence" value="ECO:0007669"/>
    <property type="project" value="UniProtKB-SubCell"/>
</dbReference>
<dbReference type="GO" id="GO:0016020">
    <property type="term" value="C:membrane"/>
    <property type="evidence" value="ECO:0007669"/>
    <property type="project" value="UniProtKB-KW"/>
</dbReference>
<dbReference type="GO" id="GO:0039618">
    <property type="term" value="C:T=pseudo3 icosahedral viral capsid"/>
    <property type="evidence" value="ECO:0007669"/>
    <property type="project" value="UniProtKB-KW"/>
</dbReference>
<dbReference type="GO" id="GO:0005524">
    <property type="term" value="F:ATP binding"/>
    <property type="evidence" value="ECO:0007669"/>
    <property type="project" value="UniProtKB-KW"/>
</dbReference>
<dbReference type="GO" id="GO:0016887">
    <property type="term" value="F:ATP hydrolysis activity"/>
    <property type="evidence" value="ECO:0007669"/>
    <property type="project" value="InterPro"/>
</dbReference>
<dbReference type="GO" id="GO:0015267">
    <property type="term" value="F:channel activity"/>
    <property type="evidence" value="ECO:0007669"/>
    <property type="project" value="UniProtKB-KW"/>
</dbReference>
<dbReference type="GO" id="GO:0004197">
    <property type="term" value="F:cysteine-type endopeptidase activity"/>
    <property type="evidence" value="ECO:0007669"/>
    <property type="project" value="UniProtKB-EC"/>
</dbReference>
<dbReference type="GO" id="GO:0003723">
    <property type="term" value="F:RNA binding"/>
    <property type="evidence" value="ECO:0007669"/>
    <property type="project" value="UniProtKB-KW"/>
</dbReference>
<dbReference type="GO" id="GO:0003724">
    <property type="term" value="F:RNA helicase activity"/>
    <property type="evidence" value="ECO:0007669"/>
    <property type="project" value="InterPro"/>
</dbReference>
<dbReference type="GO" id="GO:0003968">
    <property type="term" value="F:RNA-directed RNA polymerase activity"/>
    <property type="evidence" value="ECO:0007669"/>
    <property type="project" value="UniProtKB-KW"/>
</dbReference>
<dbReference type="GO" id="GO:0005198">
    <property type="term" value="F:structural molecule activity"/>
    <property type="evidence" value="ECO:0007669"/>
    <property type="project" value="InterPro"/>
</dbReference>
<dbReference type="GO" id="GO:0008270">
    <property type="term" value="F:zinc ion binding"/>
    <property type="evidence" value="ECO:0007669"/>
    <property type="project" value="UniProtKB-KW"/>
</dbReference>
<dbReference type="GO" id="GO:0006260">
    <property type="term" value="P:DNA replication"/>
    <property type="evidence" value="ECO:0007669"/>
    <property type="project" value="UniProtKB-KW"/>
</dbReference>
<dbReference type="GO" id="GO:0006351">
    <property type="term" value="P:DNA-templated transcription"/>
    <property type="evidence" value="ECO:0007669"/>
    <property type="project" value="InterPro"/>
</dbReference>
<dbReference type="GO" id="GO:0075509">
    <property type="term" value="P:endocytosis involved in viral entry into host cell"/>
    <property type="evidence" value="ECO:0007669"/>
    <property type="project" value="UniProtKB-KW"/>
</dbReference>
<dbReference type="GO" id="GO:0034220">
    <property type="term" value="P:monoatomic ion transmembrane transport"/>
    <property type="evidence" value="ECO:0007669"/>
    <property type="project" value="UniProtKB-KW"/>
</dbReference>
<dbReference type="GO" id="GO:0006508">
    <property type="term" value="P:proteolysis"/>
    <property type="evidence" value="ECO:0007669"/>
    <property type="project" value="UniProtKB-KW"/>
</dbReference>
<dbReference type="GO" id="GO:0044694">
    <property type="term" value="P:symbiont genome entry into host cell via pore formation in plasma membrane"/>
    <property type="evidence" value="ECO:0007669"/>
    <property type="project" value="UniProtKB-KW"/>
</dbReference>
<dbReference type="GO" id="GO:0039520">
    <property type="term" value="P:symbiont-mediated activation of host autophagy"/>
    <property type="evidence" value="ECO:0000250"/>
    <property type="project" value="UniProtKB"/>
</dbReference>
<dbReference type="GO" id="GO:0039540">
    <property type="term" value="P:symbiont-mediated suppression of host cytoplasmic pattern recognition receptor signaling pathway via inhibition of RIG-I activity"/>
    <property type="evidence" value="ECO:0007669"/>
    <property type="project" value="UniProtKB-KW"/>
</dbReference>
<dbReference type="GO" id="GO:0039522">
    <property type="term" value="P:symbiont-mediated suppression of host mRNA export from nucleus"/>
    <property type="evidence" value="ECO:0007669"/>
    <property type="project" value="UniProtKB-KW"/>
</dbReference>
<dbReference type="GO" id="GO:0039694">
    <property type="term" value="P:viral RNA genome replication"/>
    <property type="evidence" value="ECO:0007669"/>
    <property type="project" value="InterPro"/>
</dbReference>
<dbReference type="GO" id="GO:0019062">
    <property type="term" value="P:virion attachment to host cell"/>
    <property type="evidence" value="ECO:0007669"/>
    <property type="project" value="UniProtKB-KW"/>
</dbReference>
<dbReference type="CDD" id="cd23213">
    <property type="entry name" value="Enterovirus_RdRp"/>
    <property type="match status" value="1"/>
</dbReference>
<dbReference type="CDD" id="cd00205">
    <property type="entry name" value="rhv_like"/>
    <property type="match status" value="3"/>
</dbReference>
<dbReference type="FunFam" id="1.20.960.20:FF:000001">
    <property type="entry name" value="Genome polyprotein"/>
    <property type="match status" value="1"/>
</dbReference>
<dbReference type="FunFam" id="2.40.10.10:FF:000020">
    <property type="entry name" value="Genome polyprotein"/>
    <property type="match status" value="1"/>
</dbReference>
<dbReference type="FunFam" id="2.40.10.10:FF:000022">
    <property type="entry name" value="Genome polyprotein"/>
    <property type="match status" value="1"/>
</dbReference>
<dbReference type="FunFam" id="2.60.120.20:FF:000002">
    <property type="entry name" value="Genome polyprotein"/>
    <property type="match status" value="1"/>
</dbReference>
<dbReference type="FunFam" id="3.30.70.270:FF:000008">
    <property type="entry name" value="Genome polyprotein"/>
    <property type="match status" value="1"/>
</dbReference>
<dbReference type="FunFam" id="4.10.880.10:FF:000001">
    <property type="entry name" value="Genome polyprotein"/>
    <property type="match status" value="1"/>
</dbReference>
<dbReference type="FunFam" id="4.10.880.10:FF:000002">
    <property type="entry name" value="Genome polyprotein"/>
    <property type="match status" value="1"/>
</dbReference>
<dbReference type="Gene3D" id="1.20.960.20">
    <property type="match status" value="1"/>
</dbReference>
<dbReference type="Gene3D" id="2.60.120.20">
    <property type="match status" value="3"/>
</dbReference>
<dbReference type="Gene3D" id="3.30.70.270">
    <property type="match status" value="1"/>
</dbReference>
<dbReference type="Gene3D" id="6.10.20.20">
    <property type="entry name" value="Poliovirus 3A protein-like"/>
    <property type="match status" value="1"/>
</dbReference>
<dbReference type="Gene3D" id="4.10.880.10">
    <property type="entry name" value="Poliovirus 3D polymerase Domain 1 (Nucleotidyltransferase)"/>
    <property type="match status" value="2"/>
</dbReference>
<dbReference type="Gene3D" id="2.40.10.10">
    <property type="entry name" value="Trypsin-like serine proteases"/>
    <property type="match status" value="4"/>
</dbReference>
<dbReference type="InterPro" id="IPR003593">
    <property type="entry name" value="AAA+_ATPase"/>
</dbReference>
<dbReference type="InterPro" id="IPR043502">
    <property type="entry name" value="DNA/RNA_pol_sf"/>
</dbReference>
<dbReference type="InterPro" id="IPR000605">
    <property type="entry name" value="Helicase_SF3_ssDNA/RNA_vir"/>
</dbReference>
<dbReference type="InterPro" id="IPR014759">
    <property type="entry name" value="Helicase_SF3_ssRNA_vir"/>
</dbReference>
<dbReference type="InterPro" id="IPR027417">
    <property type="entry name" value="P-loop_NTPase"/>
</dbReference>
<dbReference type="InterPro" id="IPR014838">
    <property type="entry name" value="P3A"/>
</dbReference>
<dbReference type="InterPro" id="IPR036203">
    <property type="entry name" value="P3A_soluble_dom"/>
</dbReference>
<dbReference type="InterPro" id="IPR044067">
    <property type="entry name" value="PCV_3C_PRO"/>
</dbReference>
<dbReference type="InterPro" id="IPR000081">
    <property type="entry name" value="Peptidase_C3"/>
</dbReference>
<dbReference type="InterPro" id="IPR000199">
    <property type="entry name" value="Peptidase_C3A/C3B_picornavir"/>
</dbReference>
<dbReference type="InterPro" id="IPR009003">
    <property type="entry name" value="Peptidase_S1_PA"/>
</dbReference>
<dbReference type="InterPro" id="IPR043504">
    <property type="entry name" value="Peptidase_S1_PA_chymotrypsin"/>
</dbReference>
<dbReference type="InterPro" id="IPR003138">
    <property type="entry name" value="Pico_P1A"/>
</dbReference>
<dbReference type="InterPro" id="IPR002527">
    <property type="entry name" value="Pico_P2B"/>
</dbReference>
<dbReference type="InterPro" id="IPR001676">
    <property type="entry name" value="Picornavirus_capsid"/>
</dbReference>
<dbReference type="InterPro" id="IPR043128">
    <property type="entry name" value="Rev_trsase/Diguanyl_cyclase"/>
</dbReference>
<dbReference type="InterPro" id="IPR033703">
    <property type="entry name" value="Rhv-like"/>
</dbReference>
<dbReference type="InterPro" id="IPR001205">
    <property type="entry name" value="RNA-dir_pol_C"/>
</dbReference>
<dbReference type="InterPro" id="IPR007094">
    <property type="entry name" value="RNA-dir_pol_PSvirus"/>
</dbReference>
<dbReference type="InterPro" id="IPR029053">
    <property type="entry name" value="Viral_coat"/>
</dbReference>
<dbReference type="Pfam" id="PF08727">
    <property type="entry name" value="P3A"/>
    <property type="match status" value="1"/>
</dbReference>
<dbReference type="Pfam" id="PF00548">
    <property type="entry name" value="Peptidase_C3"/>
    <property type="match status" value="1"/>
</dbReference>
<dbReference type="Pfam" id="PF02226">
    <property type="entry name" value="Pico_P1A"/>
    <property type="match status" value="1"/>
</dbReference>
<dbReference type="Pfam" id="PF00947">
    <property type="entry name" value="Pico_P2A"/>
    <property type="match status" value="1"/>
</dbReference>
<dbReference type="Pfam" id="PF01552">
    <property type="entry name" value="Pico_P2B"/>
    <property type="match status" value="1"/>
</dbReference>
<dbReference type="Pfam" id="PF00680">
    <property type="entry name" value="RdRP_1"/>
    <property type="match status" value="1"/>
</dbReference>
<dbReference type="Pfam" id="PF00073">
    <property type="entry name" value="Rhv"/>
    <property type="match status" value="2"/>
</dbReference>
<dbReference type="Pfam" id="PF22663">
    <property type="entry name" value="Rhv_5"/>
    <property type="match status" value="1"/>
</dbReference>
<dbReference type="Pfam" id="PF00910">
    <property type="entry name" value="RNA_helicase"/>
    <property type="match status" value="1"/>
</dbReference>
<dbReference type="SMART" id="SM00382">
    <property type="entry name" value="AAA"/>
    <property type="match status" value="1"/>
</dbReference>
<dbReference type="SUPFAM" id="SSF56672">
    <property type="entry name" value="DNA/RNA polymerases"/>
    <property type="match status" value="1"/>
</dbReference>
<dbReference type="SUPFAM" id="SSF52540">
    <property type="entry name" value="P-loop containing nucleoside triphosphate hydrolases"/>
    <property type="match status" value="1"/>
</dbReference>
<dbReference type="SUPFAM" id="SSF88633">
    <property type="entry name" value="Positive stranded ssRNA viruses"/>
    <property type="match status" value="2"/>
</dbReference>
<dbReference type="SUPFAM" id="SSF89043">
    <property type="entry name" value="Soluble domain of poliovirus core protein 3a"/>
    <property type="match status" value="1"/>
</dbReference>
<dbReference type="SUPFAM" id="SSF50494">
    <property type="entry name" value="Trypsin-like serine proteases"/>
    <property type="match status" value="2"/>
</dbReference>
<dbReference type="PROSITE" id="PS51874">
    <property type="entry name" value="PCV_3C_PRO"/>
    <property type="match status" value="1"/>
</dbReference>
<dbReference type="PROSITE" id="PS50507">
    <property type="entry name" value="RDRP_SSRNA_POS"/>
    <property type="match status" value="1"/>
</dbReference>
<dbReference type="PROSITE" id="PS51218">
    <property type="entry name" value="SF3_HELICASE_2"/>
    <property type="match status" value="1"/>
</dbReference>
<name>POLG_HE701</name>
<organism>
    <name type="scientific">Human enterovirus 70 (strain J670/71)</name>
    <name type="common">EV70</name>
    <name type="synonym">EV-70</name>
    <dbReference type="NCBI Taxonomy" id="31915"/>
    <lineage>
        <taxon>Viruses</taxon>
        <taxon>Riboviria</taxon>
        <taxon>Orthornavirae</taxon>
        <taxon>Pisuviricota</taxon>
        <taxon>Pisoniviricetes</taxon>
        <taxon>Picornavirales</taxon>
        <taxon>Picornaviridae</taxon>
        <taxon>Ensavirinae</taxon>
        <taxon>Enterovirus</taxon>
        <taxon>Enterovirus D</taxon>
    </lineage>
</organism>
<comment type="function">
    <molecule>Capsid protein VP1</molecule>
    <text evidence="2">Forms an icosahedral capsid of pseudo T=3 symmetry with capsid proteins VP2 and VP3 (By similarity). The capsid is 300 Angstroms in diameter, composed of 60 copies of each capsid protein and enclosing the viral positive strand RNA genome (By similarity). Capsid protein VP1 mainly forms the vertices of the capsid (By similarity). Capsid protein VP1 interacts with host cell receptor to provide virion attachment to target host cells (By similarity). This attachment induces virion internalization (By similarity). Tyrosine kinases are probably involved in the entry process (By similarity). After binding to its receptor, the capsid undergoes conformational changes (By similarity). Capsid protein VP1 N-terminus (that contains an amphipathic alpha-helix) and capsid protein VP4 are externalized (By similarity). Together, they shape a pore in the host membrane through which viral genome is translocated to host cell cytoplasm (By similarity).</text>
</comment>
<comment type="function">
    <molecule>Capsid protein VP2</molecule>
    <text evidence="2">Forms an icosahedral capsid of pseudo T=3 symmetry with capsid proteins VP2 and VP3 (By similarity). The capsid is 300 Angstroms in diameter, composed of 60 copies of each capsid protein and enclosing the viral positive strand RNA genome (By similarity).</text>
</comment>
<comment type="function">
    <molecule>Capsid protein VP3</molecule>
    <text evidence="2">Forms an icosahedral capsid of pseudo T=3 symmetry with capsid proteins VP2 and VP3 (By similarity). The capsid is 300 Angstroms in diameter, composed of 60 copies of each capsid protein and enclosing the viral positive strand RNA genome (By similarity).</text>
</comment>
<comment type="function">
    <molecule>Capsid protein VP4</molecule>
    <text evidence="2">Lies on the inner surface of the capsid shell (By similarity). After binding to the host receptor, the capsid undergoes conformational changes (By similarity). Capsid protein VP4 is released, Capsid protein VP1 N-terminus is externalized, and together, they shape a pore in the host membrane through which the viral genome is translocated into the host cell cytoplasm (By similarity).</text>
</comment>
<comment type="function">
    <molecule>Capsid protein VP0</molecule>
    <text evidence="2">Component of immature procapsids, which is cleaved into capsid proteins VP4 and VP2 after maturation (By similarity). Allows the capsid to remain inactive before the maturation step (By similarity).</text>
</comment>
<comment type="function">
    <molecule>Protease 2A</molecule>
    <text evidence="2 3">Cysteine protease that cleaves viral polyprotein and specific host proteins (By similarity). It is responsible for the autocatalytic cleavage between the P1 and P2 regions, which is the first cleavage occurring in the polyprotein (By similarity). Also cleaves the host translation initiation factor EIF4G1, in order to shut down the capped cellular mRNA translation (By similarity). Inhibits the host nucleus-cytoplasm protein and RNA trafficking by cleaving host members of the nuclear pores (By similarity). Counteracts stress granule formation probably by antagonizing its assembly or promoting its dissassembly (By similarity).</text>
</comment>
<comment type="function">
    <molecule>Protein 2B</molecule>
    <text evidence="2">Plays an essential role in the virus replication cycle by acting as a viroporin. Creates a pore in the host endoplasmic reticulum and as a consequence releases Ca2+ in the cytoplasm of infected cell. In turn, high levels of cytoplasmic calcium may trigger membrane trafficking and transport of viral ER-associated proteins to viroplasms, sites of viral genome replication.</text>
</comment>
<comment type="function">
    <molecule>Protein 2C</molecule>
    <text evidence="2">Induces and associates with structural rearrangements of intracellular membranes. Displays RNA-binding, nucleotide binding and NTPase activities. May play a role in virion morphogenesis and viral RNA encapsidation by interacting with the capsid protein VP3.</text>
</comment>
<comment type="function">
    <molecule>Protein 3AB</molecule>
    <text evidence="2">Localizes the viral replication complex to the surface of membranous vesicles. Together with protein 3CD binds the Cis-Active RNA Element (CRE) which is involved in RNA synthesis initiation. Acts as a cofactor to stimulate the activity of 3D polymerase, maybe through a nucleid acid chaperone activity.</text>
</comment>
<comment type="function">
    <molecule>Protein 3A</molecule>
    <text evidence="2">Localizes the viral replication complex to the surface of membranous vesicles (By similarity). It inhibits host cell endoplasmic reticulum-to-Golgi apparatus transport and causes the disassembly of the Golgi complex, possibly through GBF1 interaction (By similarity). This would result in depletion of MHC, trail receptors and IFN receptors at the host cell surface (By similarity). Plays an essential role in viral RNA replication by recruiting ACBD3 and PI4KB at the viral replication sites, thereby allowing the formation of the rearranged membranous structures where viral replication takes place (By similarity).</text>
</comment>
<comment type="function">
    <molecule>Viral protein genome-linked</molecule>
    <text evidence="2">Acts as a primer for viral RNA replication and remains covalently bound to viral genomic RNA. VPg is uridylylated prior to priming replication into VPg-pUpU. The oriI viral genomic sequence may act as a template for this. The VPg-pUpU is then used as primer on the genomic RNA poly(A) by the RNA-dependent RNA polymerase to replicate the viral genome. During genome replication, the VPg-RNA linkage is removed by the host TDP2, thereby accelerating replication. During the late stage of the replication cycle, host TDP2 is excluded from sites of viral RNA synthesis and encapsidation, allowing for the generation of progeny virions.</text>
</comment>
<comment type="function">
    <molecule>Protein 3CD</molecule>
    <text evidence="2">Involved in the viral replication complex and viral polypeptide maturation. It exhibits protease activity with a specificity and catalytic efficiency that is different from protease 3C. Protein 3CD lacks polymerase activity. The 3C domain in the context of protein 3CD may have an RNA binding activity. Protein 3CD binds to the 5'UTR of the viral genome.</text>
</comment>
<comment type="function">
    <molecule>RNA-directed RNA polymerase</molecule>
    <text evidence="2">Replicates the viral genomic RNA on the surface of intracellular membranes. May form linear arrays of subunits that propagate along a strong head-to-tail interaction called interface-I. Covalently attaches UMP to a tyrosine of VPg, which is used to prime RNA synthesis. The positive stranded RNA genome is first replicated at virus induced membranous vesicles, creating a dsRNA genomic replication form. This dsRNA is then used as template to synthesize positive stranded RNA genomes. ss(+)RNA genomes are either translated, replicated or encapsidated.</text>
</comment>
<comment type="function">
    <molecule>Protease 3C</molecule>
    <text evidence="2 4">Major viral protease that mediates proteolytic processing of the polyprotein (By similarity). Cleaves host EIF5B, contributing to host translation shutoff (By similarity). Also cleaves host PABPC1, contributing to host translation shutoff (By similarity). Cleaves host NLRP1, triggers host N-glycine-mediated degradation of the autoinhibitory NLRP1 N-terminal fragment (By similarity).</text>
</comment>
<comment type="catalytic activity">
    <molecule>Protein 2C</molecule>
    <reaction evidence="2">
        <text>a ribonucleoside 5'-triphosphate + H2O = a ribonucleoside 5'-diphosphate + phosphate + H(+)</text>
        <dbReference type="Rhea" id="RHEA:23680"/>
        <dbReference type="ChEBI" id="CHEBI:15377"/>
        <dbReference type="ChEBI" id="CHEBI:15378"/>
        <dbReference type="ChEBI" id="CHEBI:43474"/>
        <dbReference type="ChEBI" id="CHEBI:57930"/>
        <dbReference type="ChEBI" id="CHEBI:61557"/>
        <dbReference type="EC" id="3.6.1.15"/>
    </reaction>
</comment>
<comment type="catalytic activity">
    <molecule>Protease 2A</molecule>
    <reaction evidence="2">
        <text>Selective cleavage of Tyr-|-Gly bond in the picornavirus polyprotein.</text>
        <dbReference type="EC" id="3.4.22.29"/>
    </reaction>
</comment>
<comment type="catalytic activity">
    <molecule>RNA-directed RNA polymerase</molecule>
    <reaction evidence="10">
        <text>RNA(n) + a ribonucleoside 5'-triphosphate = RNA(n+1) + diphosphate</text>
        <dbReference type="Rhea" id="RHEA:21248"/>
        <dbReference type="Rhea" id="RHEA-COMP:14527"/>
        <dbReference type="Rhea" id="RHEA-COMP:17342"/>
        <dbReference type="ChEBI" id="CHEBI:33019"/>
        <dbReference type="ChEBI" id="CHEBI:61557"/>
        <dbReference type="ChEBI" id="CHEBI:140395"/>
        <dbReference type="EC" id="2.7.7.48"/>
    </reaction>
</comment>
<comment type="catalytic activity">
    <molecule>Protease 3C</molecule>
    <reaction evidence="12">
        <text>Selective cleavage of Gln-|-Gly bond in the poliovirus polyprotein. In other picornavirus reactions Glu may be substituted for Gln, and Ser or Thr for Gly.</text>
        <dbReference type="EC" id="3.4.22.28"/>
    </reaction>
</comment>
<comment type="cofactor">
    <molecule>RNA-directed RNA polymerase</molecule>
    <cofactor evidence="2">
        <name>Mg(2+)</name>
        <dbReference type="ChEBI" id="CHEBI:18420"/>
    </cofactor>
    <text evidence="2 5">Binds 2 magnesium ions that constitute a dinuclear catalytic metal center (By similarity). The magnesium ions are not prebound but only present for catalysis (By similarity). Requires the presence of 3CDpro or 3CPro (By similarity).</text>
</comment>
<comment type="activity regulation">
    <molecule>RNA-directed RNA polymerase</molecule>
    <text evidence="2">Replication or transcription is subject to high level of random mutations by the nucleotide analog ribavirin.</text>
</comment>
<comment type="subunit">
    <molecule>Capsid protein VP0</molecule>
    <text evidence="2">Interacts with capsid protein VP1 and capsid protein VP3 to form heterotrimeric protomers.</text>
</comment>
<comment type="subunit">
    <molecule>Capsid protein VP1</molecule>
    <text evidence="2">Interacts with capsid protein VP0, and capsid protein VP3 to form heterotrimeric protomers (By similarity). Five protomers subsequently associate to form pentamers which serve as building blocks for the capsid (By similarity). Interacts with capsid protein VP2, capsid protein VP3 and capsid protein VP4 following cleavage of capsid protein VP0 (By similarity).</text>
</comment>
<comment type="subunit">
    <molecule>Capsid protein VP2</molecule>
    <text evidence="2">Interacts with capsid protein VP1 and capsid protein VP3 in the mature capsid.</text>
</comment>
<comment type="subunit">
    <molecule>Capsid protein VP3</molecule>
    <text evidence="2">Interacts with capsid protein VP0 and capsid protein VP1 to form heterotrimeric protomers (By similarity). Five protomers subsequently associate to form pentamers which serve as building blocks for the capsid (By similarity). Interacts with capsid protein VP4 in the mature capsid (By similarity). Interacts with protein 2C; this interaction may be important for virion morphogenesis (By similarity).</text>
</comment>
<comment type="subunit">
    <molecule>Capsid protein VP4</molecule>
    <text evidence="2">Interacts with capsid protein VP1 and capsid protein VP3.</text>
</comment>
<comment type="subunit">
    <molecule>Protease 2A</molecule>
    <text evidence="6">Homodimer.</text>
</comment>
<comment type="subunit">
    <molecule>Protein 2C</molecule>
    <text evidence="2">Homohexamer; forms a hexameric ring structure with 6-fold symmetry characteristic of AAA+ ATPases (By similarity). Interacts (via N-terminus) with host RTN3 (via reticulon domain); this interaction is important for viral replication (By similarity). Interacts with capsid protein VP3; this interaction may be important for virion morphogenesis (By similarity).</text>
</comment>
<comment type="subunit">
    <molecule>Protein 3AB</molecule>
    <text evidence="2">Interacts with protein 3CD.</text>
</comment>
<comment type="subunit">
    <molecule>Protein 3A</molecule>
    <text evidence="2">Homodimer (By similarity). Interacts with host GBF1 (By similarity). Interacts (via GOLD domain) with host ACBD3 (via GOLD domain); this interaction allows the formation of a viral protein 3A/ACBD3 heterotetramer with a 2:2 stoichiometry, which will stimulate the recruitment of host PI4KB in order to synthesize PI4P at the viral RNA replication sites (By similarity).</text>
</comment>
<comment type="subunit">
    <molecule>Viral protein genome-linked</molecule>
    <text evidence="2">Interacts with RNA-directed RNA polymerase.</text>
</comment>
<comment type="subunit">
    <molecule>Protein 3CD</molecule>
    <text evidence="2">Interacts with protein 3AB and with RNA-directed RNA polymerase.</text>
</comment>
<comment type="subunit">
    <molecule>RNA-directed RNA polymerase</molecule>
    <text evidence="2">Interacts with Viral protein genome-linked and with protein 3CD.</text>
</comment>
<comment type="subcellular location">
    <molecule>Capsid protein VP0</molecule>
    <subcellularLocation>
        <location>Virion</location>
    </subcellularLocation>
    <subcellularLocation>
        <location evidence="14">Host cytoplasm</location>
    </subcellularLocation>
</comment>
<comment type="subcellular location">
    <molecule>Capsid protein VP4</molecule>
    <subcellularLocation>
        <location>Virion</location>
    </subcellularLocation>
</comment>
<comment type="subcellular location">
    <molecule>Capsid protein VP2</molecule>
    <subcellularLocation>
        <location evidence="2">Virion</location>
    </subcellularLocation>
    <subcellularLocation>
        <location evidence="14">Host cytoplasm</location>
    </subcellularLocation>
</comment>
<comment type="subcellular location">
    <molecule>Capsid protein VP3</molecule>
    <subcellularLocation>
        <location evidence="2">Virion</location>
    </subcellularLocation>
    <subcellularLocation>
        <location evidence="14">Host cytoplasm</location>
    </subcellularLocation>
</comment>
<comment type="subcellular location">
    <molecule>Capsid protein VP1</molecule>
    <subcellularLocation>
        <location evidence="2">Virion</location>
    </subcellularLocation>
    <subcellularLocation>
        <location evidence="14">Host cytoplasm</location>
    </subcellularLocation>
</comment>
<comment type="subcellular location">
    <molecule>Protein 2B</molecule>
    <subcellularLocation>
        <location evidence="14">Host cytoplasmic vesicle membrane</location>
        <topology evidence="14">Peripheral membrane protein</topology>
        <orientation evidence="14">Cytoplasmic side</orientation>
    </subcellularLocation>
    <text>Probably localizes to the surface of intracellular membrane vesicles that are induced after virus infection as the site for viral RNA replication. These vesicles are derived from the endoplasmic reticulum.</text>
</comment>
<comment type="subcellular location">
    <molecule>Protein 2C</molecule>
    <subcellularLocation>
        <location evidence="14">Host cytoplasmic vesicle membrane</location>
        <topology evidence="14">Peripheral membrane protein</topology>
        <orientation evidence="14">Cytoplasmic side</orientation>
    </subcellularLocation>
    <text>Probably localizes to the surface of intracellular membrane vesicles that are induced after virus infection as the site for viral RNA replication. These vesicles are derived from the endoplasmic reticulum.</text>
</comment>
<comment type="subcellular location">
    <molecule>Protein 3A</molecule>
    <subcellularLocation>
        <location evidence="14">Host cytoplasmic vesicle membrane</location>
        <topology evidence="14">Peripheral membrane protein</topology>
        <orientation evidence="14">Cytoplasmic side</orientation>
    </subcellularLocation>
    <text>Probably localizes to the surface of intracellular membrane vesicles that are induced after virus infection as the site for viral RNA replication. These vesicles are derived from the endoplasmic reticulum.</text>
</comment>
<comment type="subcellular location">
    <molecule>Protein 3AB</molecule>
    <subcellularLocation>
        <location evidence="14">Host cytoplasmic vesicle membrane</location>
        <topology evidence="14">Peripheral membrane protein</topology>
        <orientation evidence="14">Cytoplasmic side</orientation>
    </subcellularLocation>
    <text>Probably localizes to the surface of intracellular membrane vesicles that are induced after virus infection as the site for viral RNA replication. These vesicles are derived from the endoplasmic reticulum.</text>
</comment>
<comment type="subcellular location">
    <molecule>Viral protein genome-linked</molecule>
    <subcellularLocation>
        <location evidence="2">Virion</location>
    </subcellularLocation>
    <subcellularLocation>
        <location evidence="7">Host cytoplasm</location>
    </subcellularLocation>
</comment>
<comment type="subcellular location">
    <molecule>Protease 3C</molecule>
    <subcellularLocation>
        <location>Host cytoplasm</location>
    </subcellularLocation>
</comment>
<comment type="subcellular location">
    <molecule>Protein 3CD</molecule>
    <subcellularLocation>
        <location evidence="2">Host nucleus</location>
    </subcellularLocation>
    <subcellularLocation>
        <location evidence="2">Host cytoplasm</location>
    </subcellularLocation>
    <subcellularLocation>
        <location evidence="14">Host cytoplasmic vesicle membrane</location>
        <topology evidence="14">Peripheral membrane protein</topology>
        <orientation evidence="14">Cytoplasmic side</orientation>
    </subcellularLocation>
    <text>Probably localizes to the surface of intracellular membrane vesicles that are induced after virus infection as the site for viral RNA replication. These vesicles are derived from the endoplasmic reticulum.</text>
</comment>
<comment type="subcellular location">
    <molecule>RNA-directed RNA polymerase</molecule>
    <subcellularLocation>
        <location evidence="14">Host cytoplasmic vesicle membrane</location>
        <topology evidence="14">Peripheral membrane protein</topology>
        <orientation evidence="14">Cytoplasmic side</orientation>
    </subcellularLocation>
    <text>Probably localizes to the surface of intracellular membrane vesicles that are induced after virus infection as the site for viral RNA replication. These vesicles are derived from the endoplasmic reticulum.</text>
</comment>
<comment type="domain">
    <molecule>Protein 2C</molecule>
    <text evidence="1 2">The N-terminus has membrane-binding (By similarity). The N-terminus also displays RNA-binding properties (By similarity). The N-terminus is involved in oligomerization (By similarity). The central part contains an ATPase domain and a degenerate C4-type zinc-finger with only 3 cysteines (By similarity). The C-terminus is involved in RNA-binding (By similarity). The extreme C-terminus contains a region involved in oligomerization (By similarity).</text>
</comment>
<comment type="PTM">
    <molecule>Genome polyprotein</molecule>
    <text evidence="2">Specific enzymatic cleavages in vivo by the viral proteases yield processing intermediates and the mature proteins.</text>
</comment>
<comment type="PTM">
    <molecule>Capsid protein VP0</molecule>
    <text evidence="2">Myristoylation is required for the formation of pentamers during virus assembly. Further assembly of 12 pentamers and a molecule of genomic RNA generates the provirion.</text>
</comment>
<comment type="PTM">
    <molecule>Capsid protein VP0</molecule>
    <text evidence="2">During virion maturation, immature virions are rendered infectious following cleavage of VP0 into VP4 and VP2. This maturation seems to be an autocatalytic event triggered by the presence of RNA in the capsid and it is followed by a conformational change infectious virion.</text>
</comment>
<comment type="PTM">
    <molecule>Capsid protein VP4</molecule>
    <text evidence="2">Myristoylation is required during RNA encapsidation and formation of the mature virus particle.</text>
</comment>
<comment type="PTM">
    <molecule>Viral protein genome-linked</molecule>
    <text evidence="2">VPg is uridylylated by the polymerase into VPg-pUpU. This acts as a nucleotide-peptide primer for the genomic RNA replication.</text>
</comment>
<comment type="similarity">
    <text evidence="14">Belongs to the picornaviruses polyprotein family.</text>
</comment>
<keyword id="KW-1072">Activation of host autophagy by virus</keyword>
<keyword id="KW-0067">ATP-binding</keyword>
<keyword id="KW-0068">Autocatalytic cleavage</keyword>
<keyword id="KW-0167">Capsid protein</keyword>
<keyword id="KW-0191">Covalent protein-RNA linkage</keyword>
<keyword id="KW-0235">DNA replication</keyword>
<keyword id="KW-1262">Eukaryotic host gene expression shutoff by virus</keyword>
<keyword id="KW-1193">Eukaryotic host translation shutoff by virus</keyword>
<keyword id="KW-0347">Helicase</keyword>
<keyword id="KW-1035">Host cytoplasm</keyword>
<keyword id="KW-1036">Host cytoplasmic vesicle</keyword>
<keyword id="KW-1190">Host gene expression shutoff by virus</keyword>
<keyword id="KW-1043">Host membrane</keyword>
<keyword id="KW-1192">Host mRNA suppression by virus</keyword>
<keyword id="KW-1048">Host nucleus</keyword>
<keyword id="KW-0945">Host-virus interaction</keyword>
<keyword id="KW-0378">Hydrolase</keyword>
<keyword id="KW-1090">Inhibition of host innate immune response by virus</keyword>
<keyword id="KW-1099">Inhibition of host mRNA nuclear export by virus</keyword>
<keyword id="KW-1088">Inhibition of host RIG-I by virus</keyword>
<keyword id="KW-1113">Inhibition of host RLR pathway by virus</keyword>
<keyword id="KW-0407">Ion channel</keyword>
<keyword id="KW-0406">Ion transport</keyword>
<keyword id="KW-0449">Lipoprotein</keyword>
<keyword id="KW-0460">Magnesium</keyword>
<keyword id="KW-0472">Membrane</keyword>
<keyword id="KW-0479">Metal-binding</keyword>
<keyword id="KW-0519">Myristate</keyword>
<keyword id="KW-0547">Nucleotide-binding</keyword>
<keyword id="KW-0548">Nucleotidyltransferase</keyword>
<keyword id="KW-0597">Phosphoprotein</keyword>
<keyword id="KW-1172">Pore-mediated penetration of viral genome into host cell</keyword>
<keyword id="KW-0645">Protease</keyword>
<keyword id="KW-0677">Repeat</keyword>
<keyword id="KW-0694">RNA-binding</keyword>
<keyword id="KW-0696">RNA-directed RNA polymerase</keyword>
<keyword id="KW-1143">T=pseudo3 icosahedral capsid protein</keyword>
<keyword id="KW-0788">Thiol protease</keyword>
<keyword id="KW-0808">Transferase</keyword>
<keyword id="KW-0813">Transport</keyword>
<keyword id="KW-1161">Viral attachment to host cell</keyword>
<keyword id="KW-0899">Viral immunoevasion</keyword>
<keyword id="KW-1182">Viral ion channel</keyword>
<keyword id="KW-1162">Viral penetration into host cytoplasm</keyword>
<keyword id="KW-0693">Viral RNA replication</keyword>
<keyword id="KW-0946">Virion</keyword>
<keyword id="KW-1164">Virus endocytosis by host</keyword>
<keyword id="KW-1160">Virus entry into host cell</keyword>
<keyword id="KW-0862">Zinc</keyword>
<keyword id="KW-0863">Zinc-finger</keyword>
<proteinExistence type="evidence at protein level"/>
<evidence type="ECO:0000250" key="1">
    <source>
        <dbReference type="UniProtKB" id="B9VUU3"/>
    </source>
</evidence>
<evidence type="ECO:0000250" key="2">
    <source>
        <dbReference type="UniProtKB" id="P03300"/>
    </source>
</evidence>
<evidence type="ECO:0000250" key="3">
    <source>
        <dbReference type="UniProtKB" id="P03301"/>
    </source>
</evidence>
<evidence type="ECO:0000250" key="4">
    <source>
        <dbReference type="UniProtKB" id="P03303"/>
    </source>
</evidence>
<evidence type="ECO:0000250" key="5">
    <source>
        <dbReference type="UniProtKB" id="P03313"/>
    </source>
</evidence>
<evidence type="ECO:0000250" key="6">
    <source>
        <dbReference type="UniProtKB" id="P04936"/>
    </source>
</evidence>
<evidence type="ECO:0000250" key="7">
    <source>
        <dbReference type="UniProtKB" id="Q66478"/>
    </source>
</evidence>
<evidence type="ECO:0000250" key="8">
    <source>
        <dbReference type="UniProtKB" id="Q9QF31"/>
    </source>
</evidence>
<evidence type="ECO:0000255" key="9"/>
<evidence type="ECO:0000255" key="10">
    <source>
        <dbReference type="PROSITE-ProRule" id="PRU00539"/>
    </source>
</evidence>
<evidence type="ECO:0000255" key="11">
    <source>
        <dbReference type="PROSITE-ProRule" id="PRU00551"/>
    </source>
</evidence>
<evidence type="ECO:0000255" key="12">
    <source>
        <dbReference type="PROSITE-ProRule" id="PRU01222"/>
    </source>
</evidence>
<evidence type="ECO:0000256" key="13">
    <source>
        <dbReference type="SAM" id="MobiDB-lite"/>
    </source>
</evidence>
<evidence type="ECO:0000305" key="14"/>
<sequence length="2194" mass="244595">MGAQVSRQQTGTHENANVATGGSSITYNQINFYKDSYAASASKQDFSQDPSKFTEPVAEALKAGAPVLKSPSAEACGYSDRVLQLKLGNSSIVTQEAANICCAYGEWPTYLPDNEAVAIDKPTQPETSTDRFYTLKSKKWESNSTGWWWKLPDALNQIGMFGQNVQYHYLYRSGFLCHVQCNATKFHQGTLLIVAIPEHQIGKKGTGTSASFAEVMKGAEGGVFEQPYLLDDGTSLACALVYPHQWINLRTNNSATIVLPWMNSAPMDFALRHNNWTLAVIPVCPLAGGTGNTNTYVPITISIAPMCAEYNGLRNAITQGVPTCLLPGSNQFLTTDDHSSAPAFPDFSPTPEMHIPGQVHSMLEIVQIESMMEINNVNDASGVERLRVQISAQSDMDQLLFNIPLDIQLEGPLRNTLLGNISRYYTHWSGSLEMTFMFCGSFMTTGKLIICYTPPGGSSPTDRMQAMLATHVVWDFGLQSSITIIIPWISGSHYRMFNTDAKAINANVGYVTCFMQTNLVAPVGAADQCYIVGMVAAKKDFNLRLMRDSPDIGQSAILPEQAATTQIGEIVKTVANTVESEIKAELGVIPSLNAVETGATSNTEPEEAIQTRTVINMHGTAECLVENFLGRSALVCMRSFEYKNHSTSTSSIQKNFFIWTLNTRELVQIRRKMELFTYLRFDTEITIVPTLRLFSSSNVSFSGLPNLTLQAMYVPTGARKPSSQDSFEWQSACNPSVFFKINDPPARLTIPFMSINSAYANFYDGFAGFEKKATVLYGINPANTMGNLCLRVVNSYQPVQYTLTVRVYMKPKHIKAWAPRAPRTMPYTNILNNNYAGRSAAPNAPTAIVSHRSTIKTMPNDINLTTAGPGYGGAFVGSYKIINYHLATDEEKERSVYVDWQSDVLVTTVAAHGKHQIARCRCNTGVYYCKHKNRSYPVCFEGPGIQWINESDYYPARYQTNTLLAMGPCQPGDCGGLLVCSHGVIGLVTAGGEGIVAFTDIRNLLWLEDDAMEQGITDYIQNLGSAFGTGFTETISEKAKEIQNMLVGEDSLLEKLLKALIKIVSAMVIVIRNSEDLVTVTATLALLGCNDSPWAFLKQKVCSYLGIPYTIRQSDSWLKKFTEACNALRGLDWLAQKIDKFINWLKTKILPEAREKHEFVQKLKQLPVIESQINTIEHSCPNSEXQQALFNNVQYYSHYCKKYAPLYALEAKRVSALERKINNYIQFKSKSRIEPVCLIIHGSPGTGKSVASNLIARAITEKLGGDSYSLPPDPKYFDGYKQQTVVLMDDLMQNPDGNDIAMFCQMVSTVDFIPPMASLEEKGTLYTSPFLIATTNAGSIHAPTVSDSKALARRFKFDMEIESMESYKDGVRLDMFKAVELCNPEKCRPTNYKKCCPLICGKAIQFRDKRTNVRYSVDMLVTEMIKEYRIRNSTQDKLEALFQGPPTFKEIKISVTPETPAPDAINDLLRSIDSQEVRDYCQKKGWIVMHPPTELVVDKHISRAFIALQAITTFVSIAGVVYVIYKLFAGIQGPYTGLPNQKPKVPTLRTAKVQGPSLDFAQAIMRKNTVIARTSKGEFTMLGIYDRIAVVPTHASVEEEIYINDVPVKVKDAYALRDINDVNLEITVVELDRNEKFRDIRGFLPKYEDDYNDAILSVNTSKFPNMYIPVGQTLNYGFLNLGGTPTHRILMYNFPTRAGQCGGVVTTTGKVIGIHVGGNGAQGFAAMLLQNYFTEKQGEIVSIEKTGVFINAPAKTKLEPSVFHEVFEGVKEPAVLHSKDKRLKVDFEEAIFSKYVGNKTMLMDEYMEEAVDHYVGCLEPLDISTEPIKLEEAMYGMDGLEALDLTTSAGYPYLLQGKKKRDIFNRQTRDTTEMTKMLDKYGVDLPFVTFVKDELRSREKVEKGKSRLIEASSLNDSVAMRVAFGNLYATFHKNPGVATGSAVGCDPDLFWSKIPVXLDGKIFAFDYTGYDASLSPVWFACLKKTLVKLGYTHQTAFVDYLCHSVHLYKDRKYIVNGGMPSGSSGTSIFNTMINNIIIRTLLLKVYKGIDLDQFKMIAYGDDVIASYPHEIDPGLLAKAGKEYGLIMTPADKSSGFTETTWENVTFLKRYFRADEQYPFLIHPVMPMKEIHESIRWTKDPRNTQDHVRSLCLLAWHNGEETYNEFCRKIRTVPVGRALALPVYSSLRRKWLDSF</sequence>